<keyword id="KW-0927">Auxin signaling pathway</keyword>
<keyword id="KW-0238">DNA-binding</keyword>
<keyword id="KW-0539">Nucleus</keyword>
<keyword id="KW-1185">Reference proteome</keyword>
<keyword id="KW-0804">Transcription</keyword>
<keyword id="KW-0805">Transcription regulation</keyword>
<name>ARFD_ORYSJ</name>
<reference key="1">
    <citation type="journal article" date="2002" name="Nature">
        <title>The genome sequence and structure of rice chromosome 1.</title>
        <authorList>
            <person name="Sasaki T."/>
            <person name="Matsumoto T."/>
            <person name="Yamamoto K."/>
            <person name="Sakata K."/>
            <person name="Baba T."/>
            <person name="Katayose Y."/>
            <person name="Wu J."/>
            <person name="Niimura Y."/>
            <person name="Cheng Z."/>
            <person name="Nagamura Y."/>
            <person name="Antonio B.A."/>
            <person name="Kanamori H."/>
            <person name="Hosokawa S."/>
            <person name="Masukawa M."/>
            <person name="Arikawa K."/>
            <person name="Chiden Y."/>
            <person name="Hayashi M."/>
            <person name="Okamoto M."/>
            <person name="Ando T."/>
            <person name="Aoki H."/>
            <person name="Arita K."/>
            <person name="Hamada M."/>
            <person name="Harada C."/>
            <person name="Hijishita S."/>
            <person name="Honda M."/>
            <person name="Ichikawa Y."/>
            <person name="Idonuma A."/>
            <person name="Iijima M."/>
            <person name="Ikeda M."/>
            <person name="Ikeno M."/>
            <person name="Ito S."/>
            <person name="Ito T."/>
            <person name="Ito Y."/>
            <person name="Ito Y."/>
            <person name="Iwabuchi A."/>
            <person name="Kamiya K."/>
            <person name="Karasawa W."/>
            <person name="Katagiri S."/>
            <person name="Kikuta A."/>
            <person name="Kobayashi N."/>
            <person name="Kono I."/>
            <person name="Machita K."/>
            <person name="Maehara T."/>
            <person name="Mizuno H."/>
            <person name="Mizubayashi T."/>
            <person name="Mukai Y."/>
            <person name="Nagasaki H."/>
            <person name="Nakashima M."/>
            <person name="Nakama Y."/>
            <person name="Nakamichi Y."/>
            <person name="Nakamura M."/>
            <person name="Namiki N."/>
            <person name="Negishi M."/>
            <person name="Ohta I."/>
            <person name="Ono N."/>
            <person name="Saji S."/>
            <person name="Sakai K."/>
            <person name="Shibata M."/>
            <person name="Shimokawa T."/>
            <person name="Shomura A."/>
            <person name="Song J."/>
            <person name="Takazaki Y."/>
            <person name="Terasawa K."/>
            <person name="Tsuji K."/>
            <person name="Waki K."/>
            <person name="Yamagata H."/>
            <person name="Yamane H."/>
            <person name="Yoshiki S."/>
            <person name="Yoshihara R."/>
            <person name="Yukawa K."/>
            <person name="Zhong H."/>
            <person name="Iwama H."/>
            <person name="Endo T."/>
            <person name="Ito H."/>
            <person name="Hahn J.H."/>
            <person name="Kim H.-I."/>
            <person name="Eun M.-Y."/>
            <person name="Yano M."/>
            <person name="Jiang J."/>
            <person name="Gojobori T."/>
        </authorList>
    </citation>
    <scope>NUCLEOTIDE SEQUENCE [LARGE SCALE GENOMIC DNA]</scope>
    <source>
        <strain>cv. Nipponbare</strain>
    </source>
</reference>
<reference key="2">
    <citation type="journal article" date="2005" name="Nature">
        <title>The map-based sequence of the rice genome.</title>
        <authorList>
            <consortium name="International rice genome sequencing project (IRGSP)"/>
        </authorList>
    </citation>
    <scope>NUCLEOTIDE SEQUENCE [LARGE SCALE GENOMIC DNA]</scope>
    <source>
        <strain>cv. Nipponbare</strain>
    </source>
</reference>
<reference key="3">
    <citation type="journal article" date="2008" name="Nucleic Acids Res.">
        <title>The rice annotation project database (RAP-DB): 2008 update.</title>
        <authorList>
            <consortium name="The rice annotation project (RAP)"/>
        </authorList>
    </citation>
    <scope>GENOME REANNOTATION</scope>
    <source>
        <strain>cv. Nipponbare</strain>
    </source>
</reference>
<reference key="4">
    <citation type="journal article" date="2013" name="Rice">
        <title>Improvement of the Oryza sativa Nipponbare reference genome using next generation sequence and optical map data.</title>
        <authorList>
            <person name="Kawahara Y."/>
            <person name="de la Bastide M."/>
            <person name="Hamilton J.P."/>
            <person name="Kanamori H."/>
            <person name="McCombie W.R."/>
            <person name="Ouyang S."/>
            <person name="Schwartz D.C."/>
            <person name="Tanaka T."/>
            <person name="Wu J."/>
            <person name="Zhou S."/>
            <person name="Childs K.L."/>
            <person name="Davidson R.M."/>
            <person name="Lin H."/>
            <person name="Quesada-Ocampo L."/>
            <person name="Vaillancourt B."/>
            <person name="Sakai H."/>
            <person name="Lee S.S."/>
            <person name="Kim J."/>
            <person name="Numa H."/>
            <person name="Itoh T."/>
            <person name="Buell C.R."/>
            <person name="Matsumoto T."/>
        </authorList>
    </citation>
    <scope>GENOME REANNOTATION</scope>
    <source>
        <strain>cv. Nipponbare</strain>
    </source>
</reference>
<reference key="5">
    <citation type="journal article" date="2003" name="Science">
        <title>Collection, mapping, and annotation of over 28,000 cDNA clones from japonica rice.</title>
        <authorList>
            <consortium name="The rice full-length cDNA consortium"/>
        </authorList>
    </citation>
    <scope>NUCLEOTIDE SEQUENCE [LARGE SCALE MRNA]</scope>
    <source>
        <strain>cv. Nipponbare</strain>
    </source>
</reference>
<reference key="6">
    <citation type="journal article" date="2001" name="Genes Genet. Syst.">
        <title>Auxin response factor family in rice.</title>
        <authorList>
            <person name="Sato Y."/>
            <person name="Nishimura A."/>
            <person name="Ito M."/>
            <person name="Ashikari M."/>
            <person name="Hirano H.-Y."/>
            <person name="Matsuoka M."/>
        </authorList>
    </citation>
    <scope>NUCLEOTIDE SEQUENCE [MRNA] OF 18-808</scope>
    <source>
        <strain>cv. Nipponbare</strain>
    </source>
</reference>
<reference key="7">
    <citation type="journal article" date="2007" name="Gene">
        <title>Genome-wide analysis of the auxin response factors (ARF) gene family in rice (Oryza sativa).</title>
        <authorList>
            <person name="Wang D."/>
            <person name="Pei K."/>
            <person name="Fu Y."/>
            <person name="Sun Z."/>
            <person name="Li S."/>
            <person name="Liu H."/>
            <person name="Tang K."/>
            <person name="Han B."/>
            <person name="Tao Y."/>
        </authorList>
    </citation>
    <scope>GENE FAMILY</scope>
    <scope>TISSUE SPECIFICITY</scope>
    <scope>NOMENCLATURE</scope>
</reference>
<protein>
    <recommendedName>
        <fullName>Auxin response factor 4</fullName>
    </recommendedName>
    <alternativeName>
        <fullName>OsARF2</fullName>
    </alternativeName>
</protein>
<feature type="chain" id="PRO_0000299257" description="Auxin response factor 4">
    <location>
        <begin position="1"/>
        <end position="808"/>
    </location>
</feature>
<feature type="domain" description="PB1" evidence="3">
    <location>
        <begin position="692"/>
        <end position="785"/>
    </location>
</feature>
<feature type="DNA-binding region" description="TF-B3" evidence="2">
    <location>
        <begin position="129"/>
        <end position="231"/>
    </location>
</feature>
<feature type="region of interest" description="Disordered" evidence="4">
    <location>
        <begin position="1"/>
        <end position="20"/>
    </location>
</feature>
<feature type="region of interest" description="Disordered" evidence="4">
    <location>
        <begin position="342"/>
        <end position="433"/>
    </location>
</feature>
<feature type="region of interest" description="Disordered" evidence="4">
    <location>
        <begin position="661"/>
        <end position="691"/>
    </location>
</feature>
<feature type="region of interest" description="Disordered" evidence="4">
    <location>
        <begin position="778"/>
        <end position="808"/>
    </location>
</feature>
<feature type="compositionally biased region" description="Pro residues" evidence="4">
    <location>
        <begin position="1"/>
        <end position="13"/>
    </location>
</feature>
<feature type="compositionally biased region" description="Basic and acidic residues" evidence="4">
    <location>
        <begin position="342"/>
        <end position="352"/>
    </location>
</feature>
<feature type="compositionally biased region" description="Polar residues" evidence="4">
    <location>
        <begin position="402"/>
        <end position="432"/>
    </location>
</feature>
<feature type="compositionally biased region" description="Basic and acidic residues" evidence="4">
    <location>
        <begin position="787"/>
        <end position="799"/>
    </location>
</feature>
<evidence type="ECO:0000250" key="1"/>
<evidence type="ECO:0000255" key="2">
    <source>
        <dbReference type="PROSITE-ProRule" id="PRU00326"/>
    </source>
</evidence>
<evidence type="ECO:0000255" key="3">
    <source>
        <dbReference type="PROSITE-ProRule" id="PRU01081"/>
    </source>
</evidence>
<evidence type="ECO:0000256" key="4">
    <source>
        <dbReference type="SAM" id="MobiDB-lite"/>
    </source>
</evidence>
<evidence type="ECO:0000269" key="5">
    <source>
    </source>
</evidence>
<evidence type="ECO:0000305" key="6"/>
<accession>Q5JK20</accession>
<accession>A0A0P0VCI4</accession>
<accession>Q8S982</accession>
<comment type="function">
    <text>Auxin response factors (ARFs) are transcriptional factors that bind specifically to the DNA sequence 5'-TGTCTC-3' found in the auxin-responsive promoter elements (AuxREs).</text>
</comment>
<comment type="subunit">
    <text evidence="1">Homodimers and heterodimers.</text>
</comment>
<comment type="subcellular location">
    <subcellularLocation>
        <location evidence="2">Nucleus</location>
    </subcellularLocation>
</comment>
<comment type="tissue specificity">
    <text evidence="5">Expressed in roots, culms, leaves and young panicles.</text>
</comment>
<comment type="domain">
    <text>Interactions between auxin response factors (ARFs) and Aux/IAA proteins occur through their C-terminal dimerization domains III and IV.</text>
</comment>
<comment type="similarity">
    <text evidence="6">Belongs to the ARF family.</text>
</comment>
<comment type="sequence caution" evidence="6">
    <conflict type="erroneous termination">
        <sequence resource="EMBL" id="AK072309"/>
    </conflict>
    <text>Truncated C-terminus.</text>
</comment>
<sequence length="808" mass="90855">MPPAAMAPPPPPQGSSTGDPLYDELWHACAGPLVTVPRVGDLVFYFPQGHIEQVEASMNQVADSQMRLYDLPSKLLCRVLNVELKAEQDTDEVYAQVMLMPEPEQNEMAVEKTTPTSGPVQARPPVRSFCKTLTASDTSTHGGFSVLRRHADECLPPLDMTQSPPTQELVAKDLHSMDWRFRHIFRGQPRRHLLQSGWSVFVSSKRLVAGDAFIFLRGENGELRVGVRRAMRQLSNVPSSVISSQSMHLGVLATAWHAINTKSMFTVYYKPRTSPSEFIIPYDQYMESVKNNYSVGMRFRMRFEGEEAPEQRFTGTIIGSENLDPVWPESSWRSLKVRWDEPSTIPRPDRVSPWKIEPASSPPVNPLPLSRVKRPRPNAPPASPESPILTKEAATKVDTDPAQAQRSQNSTVLQGQEQMTLRSNLTESNDSDVTAHKPMMWSPSPNAAKAHPLTFQQRPPMDNWMQLGRRETDFKDVRSGSQSFGDSPGFFMQNFDEAPNRLTSFKNQFQDQGSARHFSDPYYYVSPQPSLTVESSTQMHTDSKELHFWNGQSTVYGNSRDRPQNFRFEQNSSSWLNQSFARPEQPRVIRPHASIAPVELEKTEGSGFKIFGFKVDTTNAPNNHLSSPMAATHEPMLQTPSSLNQLQPVQTDCIPEVSVSTAGTATENEKSGQQAQQSSKDVQSKTQVASTRSCTKVHKQGVALGRSVDLSKFSNYDELKAELDKMFEFDGELVSSNKNWQIVYTDNEGDMMLVGDDPWEEFCSIVRKIYIYTKEEVQKMNSKSNAPRKDDSSENEKGHLPMPNKSDN</sequence>
<dbReference type="EMBL" id="AP004332">
    <property type="protein sequence ID" value="BAD88200.1"/>
    <property type="molecule type" value="Genomic_DNA"/>
</dbReference>
<dbReference type="EMBL" id="AP008207">
    <property type="protein sequence ID" value="BAF07184.1"/>
    <property type="molecule type" value="Genomic_DNA"/>
</dbReference>
<dbReference type="EMBL" id="AP014957">
    <property type="protein sequence ID" value="BAS76004.1"/>
    <property type="molecule type" value="Genomic_DNA"/>
</dbReference>
<dbReference type="EMBL" id="AK072309">
    <property type="status" value="NOT_ANNOTATED_CDS"/>
    <property type="molecule type" value="mRNA"/>
</dbReference>
<dbReference type="EMBL" id="AB071293">
    <property type="protein sequence ID" value="BAB85913.1"/>
    <property type="molecule type" value="mRNA"/>
</dbReference>
<dbReference type="RefSeq" id="XP_015650953.1">
    <property type="nucleotide sequence ID" value="XM_015795467.1"/>
</dbReference>
<dbReference type="SMR" id="Q5JK20"/>
<dbReference type="FunCoup" id="Q5JK20">
    <property type="interactions" value="90"/>
</dbReference>
<dbReference type="PaxDb" id="39947-Q5JK20"/>
<dbReference type="EnsemblPlants" id="Os01t0927600-01">
    <property type="protein sequence ID" value="Os01t0927600-01"/>
    <property type="gene ID" value="Os01g0927600"/>
</dbReference>
<dbReference type="Gramene" id="Os01t0927600-01">
    <property type="protein sequence ID" value="Os01t0927600-01"/>
    <property type="gene ID" value="Os01g0927600"/>
</dbReference>
<dbReference type="KEGG" id="dosa:Os01g0927600"/>
<dbReference type="eggNOG" id="ENOG502QRXI">
    <property type="taxonomic scope" value="Eukaryota"/>
</dbReference>
<dbReference type="HOGENOM" id="CLU_002626_2_2_1"/>
<dbReference type="InParanoid" id="Q5JK20"/>
<dbReference type="OMA" id="LHFWNGQ"/>
<dbReference type="OrthoDB" id="1912783at2759"/>
<dbReference type="PlantReactome" id="R-OSA-5608118">
    <property type="pathway name" value="Auxin signalling"/>
</dbReference>
<dbReference type="Proteomes" id="UP000000763">
    <property type="component" value="Chromosome 1"/>
</dbReference>
<dbReference type="Proteomes" id="UP000059680">
    <property type="component" value="Chromosome 1"/>
</dbReference>
<dbReference type="GO" id="GO:0005634">
    <property type="term" value="C:nucleus"/>
    <property type="evidence" value="ECO:0007669"/>
    <property type="project" value="UniProtKB-SubCell"/>
</dbReference>
<dbReference type="GO" id="GO:0003677">
    <property type="term" value="F:DNA binding"/>
    <property type="evidence" value="ECO:0007669"/>
    <property type="project" value="UniProtKB-KW"/>
</dbReference>
<dbReference type="GO" id="GO:0009734">
    <property type="term" value="P:auxin-activated signaling pathway"/>
    <property type="evidence" value="ECO:0007669"/>
    <property type="project" value="UniProtKB-KW"/>
</dbReference>
<dbReference type="GO" id="GO:0006355">
    <property type="term" value="P:regulation of DNA-templated transcription"/>
    <property type="evidence" value="ECO:0007669"/>
    <property type="project" value="InterPro"/>
</dbReference>
<dbReference type="CDD" id="cd10017">
    <property type="entry name" value="B3_DNA"/>
    <property type="match status" value="1"/>
</dbReference>
<dbReference type="FunFam" id="2.30.30.1040:FF:000001">
    <property type="entry name" value="Auxin response factor"/>
    <property type="match status" value="1"/>
</dbReference>
<dbReference type="FunFam" id="2.40.330.10:FF:000001">
    <property type="entry name" value="Auxin response factor"/>
    <property type="match status" value="1"/>
</dbReference>
<dbReference type="FunFam" id="3.10.20.90:FF:000047">
    <property type="entry name" value="Auxin response factor"/>
    <property type="match status" value="1"/>
</dbReference>
<dbReference type="Gene3D" id="2.30.30.1040">
    <property type="match status" value="1"/>
</dbReference>
<dbReference type="Gene3D" id="2.40.330.10">
    <property type="entry name" value="DNA-binding pseudobarrel domain"/>
    <property type="match status" value="1"/>
</dbReference>
<dbReference type="Gene3D" id="3.10.20.90">
    <property type="entry name" value="Phosphatidylinositol 3-kinase Catalytic Subunit, Chain A, domain 1"/>
    <property type="match status" value="1"/>
</dbReference>
<dbReference type="InterPro" id="IPR010525">
    <property type="entry name" value="ARF_dom"/>
</dbReference>
<dbReference type="InterPro" id="IPR044835">
    <property type="entry name" value="ARF_plant"/>
</dbReference>
<dbReference type="InterPro" id="IPR033389">
    <property type="entry name" value="AUX/IAA_dom"/>
</dbReference>
<dbReference type="InterPro" id="IPR003340">
    <property type="entry name" value="B3_DNA-bd"/>
</dbReference>
<dbReference type="InterPro" id="IPR015300">
    <property type="entry name" value="DNA-bd_pseudobarrel_sf"/>
</dbReference>
<dbReference type="InterPro" id="IPR053793">
    <property type="entry name" value="PB1-like"/>
</dbReference>
<dbReference type="PANTHER" id="PTHR31384:SF72">
    <property type="entry name" value="AUXIN RESPONSE FACTOR 4"/>
    <property type="match status" value="1"/>
</dbReference>
<dbReference type="PANTHER" id="PTHR31384">
    <property type="entry name" value="AUXIN RESPONSE FACTOR 4-RELATED"/>
    <property type="match status" value="1"/>
</dbReference>
<dbReference type="Pfam" id="PF06507">
    <property type="entry name" value="ARF_AD"/>
    <property type="match status" value="1"/>
</dbReference>
<dbReference type="Pfam" id="PF02309">
    <property type="entry name" value="AUX_IAA"/>
    <property type="match status" value="1"/>
</dbReference>
<dbReference type="Pfam" id="PF02362">
    <property type="entry name" value="B3"/>
    <property type="match status" value="1"/>
</dbReference>
<dbReference type="SMART" id="SM01019">
    <property type="entry name" value="B3"/>
    <property type="match status" value="1"/>
</dbReference>
<dbReference type="SUPFAM" id="SSF54277">
    <property type="entry name" value="CAD &amp; PB1 domains"/>
    <property type="match status" value="1"/>
</dbReference>
<dbReference type="SUPFAM" id="SSF101936">
    <property type="entry name" value="DNA-binding pseudobarrel domain"/>
    <property type="match status" value="1"/>
</dbReference>
<dbReference type="PROSITE" id="PS50863">
    <property type="entry name" value="B3"/>
    <property type="match status" value="1"/>
</dbReference>
<dbReference type="PROSITE" id="PS51745">
    <property type="entry name" value="PB1"/>
    <property type="match status" value="1"/>
</dbReference>
<gene>
    <name type="primary">ARF4</name>
    <name type="synonym">ARF2</name>
    <name type="ordered locus">Os01g0927600</name>
    <name type="ordered locus">LOC_Os01g70270</name>
    <name type="ORF">OSJNBa0093F16.35</name>
</gene>
<proteinExistence type="evidence at transcript level"/>
<organism>
    <name type="scientific">Oryza sativa subsp. japonica</name>
    <name type="common">Rice</name>
    <dbReference type="NCBI Taxonomy" id="39947"/>
    <lineage>
        <taxon>Eukaryota</taxon>
        <taxon>Viridiplantae</taxon>
        <taxon>Streptophyta</taxon>
        <taxon>Embryophyta</taxon>
        <taxon>Tracheophyta</taxon>
        <taxon>Spermatophyta</taxon>
        <taxon>Magnoliopsida</taxon>
        <taxon>Liliopsida</taxon>
        <taxon>Poales</taxon>
        <taxon>Poaceae</taxon>
        <taxon>BOP clade</taxon>
        <taxon>Oryzoideae</taxon>
        <taxon>Oryzeae</taxon>
        <taxon>Oryzinae</taxon>
        <taxon>Oryza</taxon>
        <taxon>Oryza sativa</taxon>
    </lineage>
</organism>